<proteinExistence type="inferred from homology"/>
<keyword id="KW-0687">Ribonucleoprotein</keyword>
<keyword id="KW-0689">Ribosomal protein</keyword>
<feature type="chain" id="PRO_1000087101" description="Large ribosomal subunit protein uL13">
    <location>
        <begin position="1"/>
        <end position="155"/>
    </location>
</feature>
<protein>
    <recommendedName>
        <fullName evidence="1">Large ribosomal subunit protein uL13</fullName>
    </recommendedName>
    <alternativeName>
        <fullName evidence="2">50S ribosomal protein L13</fullName>
    </alternativeName>
</protein>
<accession>B0BWQ0</accession>
<comment type="function">
    <text evidence="1">This protein is one of the early assembly proteins of the 50S ribosomal subunit, although it is not seen to bind rRNA by itself. It is important during the early stages of 50S assembly.</text>
</comment>
<comment type="subunit">
    <text evidence="1">Part of the 50S ribosomal subunit.</text>
</comment>
<comment type="similarity">
    <text evidence="1">Belongs to the universal ribosomal protein uL13 family.</text>
</comment>
<evidence type="ECO:0000255" key="1">
    <source>
        <dbReference type="HAMAP-Rule" id="MF_01366"/>
    </source>
</evidence>
<evidence type="ECO:0000305" key="2"/>
<name>RL13_RICRO</name>
<organism>
    <name type="scientific">Rickettsia rickettsii (strain Iowa)</name>
    <dbReference type="NCBI Taxonomy" id="452659"/>
    <lineage>
        <taxon>Bacteria</taxon>
        <taxon>Pseudomonadati</taxon>
        <taxon>Pseudomonadota</taxon>
        <taxon>Alphaproteobacteria</taxon>
        <taxon>Rickettsiales</taxon>
        <taxon>Rickettsiaceae</taxon>
        <taxon>Rickettsieae</taxon>
        <taxon>Rickettsia</taxon>
        <taxon>spotted fever group</taxon>
    </lineage>
</organism>
<sequence length="155" mass="17391">MKTYSAKPSEIEKKWWVIDAKNIVLGRLASRVANMLRGKHKPSFTPHLDCGDNIIIINAEHVNLTGKKANPKDGKIYYRYTGFPGGIKDTTAGKILSGKHPERVIKMAVKRMITRNALGAKQMSNLYVYANGDHPHMAQQPTVYDFASQNPKNKK</sequence>
<reference key="1">
    <citation type="journal article" date="2008" name="Infect. Immun.">
        <title>Genomic comparison of virulent Rickettsia rickettsii Sheila Smith and avirulent Rickettsia rickettsii Iowa.</title>
        <authorList>
            <person name="Ellison D.W."/>
            <person name="Clark T.R."/>
            <person name="Sturdevant D.E."/>
            <person name="Virtaneva K."/>
            <person name="Porcella S.F."/>
            <person name="Hackstadt T."/>
        </authorList>
    </citation>
    <scope>NUCLEOTIDE SEQUENCE [LARGE SCALE GENOMIC DNA]</scope>
    <source>
        <strain>Iowa</strain>
    </source>
</reference>
<gene>
    <name evidence="1" type="primary">rplM</name>
    <name type="ordered locus">RrIowa_0380</name>
</gene>
<dbReference type="EMBL" id="CP000766">
    <property type="protein sequence ID" value="ABY72276.1"/>
    <property type="molecule type" value="Genomic_DNA"/>
</dbReference>
<dbReference type="RefSeq" id="WP_012150529.1">
    <property type="nucleotide sequence ID" value="NC_010263.3"/>
</dbReference>
<dbReference type="SMR" id="B0BWQ0"/>
<dbReference type="GeneID" id="79937090"/>
<dbReference type="KEGG" id="rrj:RrIowa_0380"/>
<dbReference type="eggNOG" id="COG0102">
    <property type="taxonomic scope" value="Bacteria"/>
</dbReference>
<dbReference type="HOGENOM" id="CLU_082184_2_0_5"/>
<dbReference type="Proteomes" id="UP000000796">
    <property type="component" value="Chromosome"/>
</dbReference>
<dbReference type="GO" id="GO:0022625">
    <property type="term" value="C:cytosolic large ribosomal subunit"/>
    <property type="evidence" value="ECO:0007669"/>
    <property type="project" value="TreeGrafter"/>
</dbReference>
<dbReference type="GO" id="GO:0003729">
    <property type="term" value="F:mRNA binding"/>
    <property type="evidence" value="ECO:0007669"/>
    <property type="project" value="TreeGrafter"/>
</dbReference>
<dbReference type="GO" id="GO:0003735">
    <property type="term" value="F:structural constituent of ribosome"/>
    <property type="evidence" value="ECO:0007669"/>
    <property type="project" value="InterPro"/>
</dbReference>
<dbReference type="GO" id="GO:0017148">
    <property type="term" value="P:negative regulation of translation"/>
    <property type="evidence" value="ECO:0007669"/>
    <property type="project" value="TreeGrafter"/>
</dbReference>
<dbReference type="GO" id="GO:0006412">
    <property type="term" value="P:translation"/>
    <property type="evidence" value="ECO:0007669"/>
    <property type="project" value="UniProtKB-UniRule"/>
</dbReference>
<dbReference type="CDD" id="cd00392">
    <property type="entry name" value="Ribosomal_L13"/>
    <property type="match status" value="1"/>
</dbReference>
<dbReference type="Gene3D" id="3.90.1180.10">
    <property type="entry name" value="Ribosomal protein L13"/>
    <property type="match status" value="1"/>
</dbReference>
<dbReference type="HAMAP" id="MF_01366">
    <property type="entry name" value="Ribosomal_uL13"/>
    <property type="match status" value="1"/>
</dbReference>
<dbReference type="InterPro" id="IPR005822">
    <property type="entry name" value="Ribosomal_uL13"/>
</dbReference>
<dbReference type="InterPro" id="IPR005823">
    <property type="entry name" value="Ribosomal_uL13_bac-type"/>
</dbReference>
<dbReference type="InterPro" id="IPR023563">
    <property type="entry name" value="Ribosomal_uL13_CS"/>
</dbReference>
<dbReference type="InterPro" id="IPR036899">
    <property type="entry name" value="Ribosomal_uL13_sf"/>
</dbReference>
<dbReference type="NCBIfam" id="TIGR01066">
    <property type="entry name" value="rplM_bact"/>
    <property type="match status" value="1"/>
</dbReference>
<dbReference type="PANTHER" id="PTHR11545:SF2">
    <property type="entry name" value="LARGE RIBOSOMAL SUBUNIT PROTEIN UL13M"/>
    <property type="match status" value="1"/>
</dbReference>
<dbReference type="PANTHER" id="PTHR11545">
    <property type="entry name" value="RIBOSOMAL PROTEIN L13"/>
    <property type="match status" value="1"/>
</dbReference>
<dbReference type="Pfam" id="PF00572">
    <property type="entry name" value="Ribosomal_L13"/>
    <property type="match status" value="1"/>
</dbReference>
<dbReference type="PIRSF" id="PIRSF002181">
    <property type="entry name" value="Ribosomal_L13"/>
    <property type="match status" value="1"/>
</dbReference>
<dbReference type="SUPFAM" id="SSF52161">
    <property type="entry name" value="Ribosomal protein L13"/>
    <property type="match status" value="1"/>
</dbReference>
<dbReference type="PROSITE" id="PS00783">
    <property type="entry name" value="RIBOSOMAL_L13"/>
    <property type="match status" value="1"/>
</dbReference>